<sequence>MNLQIIILAAGQGKRMYSDTPKVLHHLAGKPLLTHVVETAQQLNPDAIHVIYGHGGEQIKSSLPNLPVHWVHQAEQLGTGHAVLQAMPHIPDDAYVLVLSADVPLIQVGTLQSLIECSQRQNPDHSVLALLVAELENPSGLGRIIRNNQGEIYSIVEEKDANEQVKNIKEIYSGVCCTLANNLKKWLPQLSNSNAQGEYYLTEIISLAVQNKTPITSLTAKNSFEVQGINNRQQLQQLERTWQQRAANQLMEKGATLADANRFDLRGELYCGKDVYIDINCIFTGKVVLGNGCKIGPNCSLTNVTLGDGCEVYANSVLEGCHIANDCHIGPFARLRSGTQLASHCKIGNFVETKKAIFDEGTKASHLSYLGDVLLGKNVNVGAGTITCNYDGVNKHQTIIEDGVFIGSDTQLVAPVTVGANATIGAGSTIRRNVPPDELTLTESRQKTIYGWKRPVKRERD</sequence>
<evidence type="ECO:0000255" key="1">
    <source>
        <dbReference type="HAMAP-Rule" id="MF_01631"/>
    </source>
</evidence>
<proteinExistence type="inferred from homology"/>
<reference key="1">
    <citation type="journal article" date="2004" name="Nat. Genet.">
        <title>Evidence in the Legionella pneumophila genome for exploitation of host cell functions and high genome plasticity.</title>
        <authorList>
            <person name="Cazalet C."/>
            <person name="Rusniok C."/>
            <person name="Brueggemann H."/>
            <person name="Zidane N."/>
            <person name="Magnier A."/>
            <person name="Ma L."/>
            <person name="Tichit M."/>
            <person name="Jarraud S."/>
            <person name="Bouchier C."/>
            <person name="Vandenesch F."/>
            <person name="Kunst F."/>
            <person name="Etienne J."/>
            <person name="Glaser P."/>
            <person name="Buchrieser C."/>
        </authorList>
    </citation>
    <scope>NUCLEOTIDE SEQUENCE [LARGE SCALE GENOMIC DNA]</scope>
    <source>
        <strain>Paris</strain>
    </source>
</reference>
<comment type="function">
    <text evidence="1">Catalyzes the last two sequential reactions in the de novo biosynthetic pathway for UDP-N-acetylglucosamine (UDP-GlcNAc). The C-terminal domain catalyzes the transfer of acetyl group from acetyl coenzyme A to glucosamine-1-phosphate (GlcN-1-P) to produce N-acetylglucosamine-1-phosphate (GlcNAc-1-P), which is converted into UDP-GlcNAc by the transfer of uridine 5-monophosphate (from uridine 5-triphosphate), a reaction catalyzed by the N-terminal domain.</text>
</comment>
<comment type="catalytic activity">
    <reaction evidence="1">
        <text>alpha-D-glucosamine 1-phosphate + acetyl-CoA = N-acetyl-alpha-D-glucosamine 1-phosphate + CoA + H(+)</text>
        <dbReference type="Rhea" id="RHEA:13725"/>
        <dbReference type="ChEBI" id="CHEBI:15378"/>
        <dbReference type="ChEBI" id="CHEBI:57287"/>
        <dbReference type="ChEBI" id="CHEBI:57288"/>
        <dbReference type="ChEBI" id="CHEBI:57776"/>
        <dbReference type="ChEBI" id="CHEBI:58516"/>
        <dbReference type="EC" id="2.3.1.157"/>
    </reaction>
</comment>
<comment type="catalytic activity">
    <reaction evidence="1">
        <text>N-acetyl-alpha-D-glucosamine 1-phosphate + UTP + H(+) = UDP-N-acetyl-alpha-D-glucosamine + diphosphate</text>
        <dbReference type="Rhea" id="RHEA:13509"/>
        <dbReference type="ChEBI" id="CHEBI:15378"/>
        <dbReference type="ChEBI" id="CHEBI:33019"/>
        <dbReference type="ChEBI" id="CHEBI:46398"/>
        <dbReference type="ChEBI" id="CHEBI:57705"/>
        <dbReference type="ChEBI" id="CHEBI:57776"/>
        <dbReference type="EC" id="2.7.7.23"/>
    </reaction>
</comment>
<comment type="cofactor">
    <cofactor evidence="1">
        <name>Mg(2+)</name>
        <dbReference type="ChEBI" id="CHEBI:18420"/>
    </cofactor>
    <text evidence="1">Binds 1 Mg(2+) ion per subunit.</text>
</comment>
<comment type="pathway">
    <text evidence="1">Nucleotide-sugar biosynthesis; UDP-N-acetyl-alpha-D-glucosamine biosynthesis; N-acetyl-alpha-D-glucosamine 1-phosphate from alpha-D-glucosamine 6-phosphate (route II): step 2/2.</text>
</comment>
<comment type="pathway">
    <text evidence="1">Nucleotide-sugar biosynthesis; UDP-N-acetyl-alpha-D-glucosamine biosynthesis; UDP-N-acetyl-alpha-D-glucosamine from N-acetyl-alpha-D-glucosamine 1-phosphate: step 1/1.</text>
</comment>
<comment type="pathway">
    <text evidence="1">Bacterial outer membrane biogenesis; LPS lipid A biosynthesis.</text>
</comment>
<comment type="subunit">
    <text evidence="1">Homotrimer.</text>
</comment>
<comment type="subcellular location">
    <subcellularLocation>
        <location evidence="1">Cytoplasm</location>
    </subcellularLocation>
</comment>
<comment type="similarity">
    <text evidence="1">In the N-terminal section; belongs to the N-acetylglucosamine-1-phosphate uridyltransferase family.</text>
</comment>
<comment type="similarity">
    <text evidence="1">In the C-terminal section; belongs to the transferase hexapeptide repeat family.</text>
</comment>
<dbReference type="EC" id="2.7.7.23" evidence="1"/>
<dbReference type="EC" id="2.3.1.157" evidence="1"/>
<dbReference type="EMBL" id="CR628336">
    <property type="protein sequence ID" value="CAH14087.1"/>
    <property type="molecule type" value="Genomic_DNA"/>
</dbReference>
<dbReference type="RefSeq" id="WP_015961871.1">
    <property type="nucleotide sequence ID" value="NC_006368.1"/>
</dbReference>
<dbReference type="SMR" id="Q5X112"/>
<dbReference type="KEGG" id="lpp:lpp2934"/>
<dbReference type="LegioList" id="lpp2934"/>
<dbReference type="HOGENOM" id="CLU_029499_15_2_6"/>
<dbReference type="UniPathway" id="UPA00113">
    <property type="reaction ID" value="UER00532"/>
</dbReference>
<dbReference type="UniPathway" id="UPA00113">
    <property type="reaction ID" value="UER00533"/>
</dbReference>
<dbReference type="UniPathway" id="UPA00973"/>
<dbReference type="GO" id="GO:0005737">
    <property type="term" value="C:cytoplasm"/>
    <property type="evidence" value="ECO:0007669"/>
    <property type="project" value="UniProtKB-SubCell"/>
</dbReference>
<dbReference type="GO" id="GO:0016020">
    <property type="term" value="C:membrane"/>
    <property type="evidence" value="ECO:0007669"/>
    <property type="project" value="GOC"/>
</dbReference>
<dbReference type="GO" id="GO:0019134">
    <property type="term" value="F:glucosamine-1-phosphate N-acetyltransferase activity"/>
    <property type="evidence" value="ECO:0007669"/>
    <property type="project" value="UniProtKB-UniRule"/>
</dbReference>
<dbReference type="GO" id="GO:0000287">
    <property type="term" value="F:magnesium ion binding"/>
    <property type="evidence" value="ECO:0007669"/>
    <property type="project" value="UniProtKB-UniRule"/>
</dbReference>
<dbReference type="GO" id="GO:0003977">
    <property type="term" value="F:UDP-N-acetylglucosamine diphosphorylase activity"/>
    <property type="evidence" value="ECO:0007669"/>
    <property type="project" value="UniProtKB-UniRule"/>
</dbReference>
<dbReference type="GO" id="GO:0000902">
    <property type="term" value="P:cell morphogenesis"/>
    <property type="evidence" value="ECO:0007669"/>
    <property type="project" value="UniProtKB-UniRule"/>
</dbReference>
<dbReference type="GO" id="GO:0071555">
    <property type="term" value="P:cell wall organization"/>
    <property type="evidence" value="ECO:0007669"/>
    <property type="project" value="UniProtKB-KW"/>
</dbReference>
<dbReference type="GO" id="GO:0009245">
    <property type="term" value="P:lipid A biosynthetic process"/>
    <property type="evidence" value="ECO:0007669"/>
    <property type="project" value="UniProtKB-UniRule"/>
</dbReference>
<dbReference type="GO" id="GO:0009252">
    <property type="term" value="P:peptidoglycan biosynthetic process"/>
    <property type="evidence" value="ECO:0007669"/>
    <property type="project" value="UniProtKB-UniRule"/>
</dbReference>
<dbReference type="GO" id="GO:0008360">
    <property type="term" value="P:regulation of cell shape"/>
    <property type="evidence" value="ECO:0007669"/>
    <property type="project" value="UniProtKB-KW"/>
</dbReference>
<dbReference type="GO" id="GO:0006048">
    <property type="term" value="P:UDP-N-acetylglucosamine biosynthetic process"/>
    <property type="evidence" value="ECO:0007669"/>
    <property type="project" value="UniProtKB-UniPathway"/>
</dbReference>
<dbReference type="CDD" id="cd02540">
    <property type="entry name" value="GT2_GlmU_N_bac"/>
    <property type="match status" value="1"/>
</dbReference>
<dbReference type="CDD" id="cd03353">
    <property type="entry name" value="LbH_GlmU_C"/>
    <property type="match status" value="1"/>
</dbReference>
<dbReference type="Gene3D" id="2.160.10.10">
    <property type="entry name" value="Hexapeptide repeat proteins"/>
    <property type="match status" value="1"/>
</dbReference>
<dbReference type="Gene3D" id="3.90.550.10">
    <property type="entry name" value="Spore Coat Polysaccharide Biosynthesis Protein SpsA, Chain A"/>
    <property type="match status" value="1"/>
</dbReference>
<dbReference type="HAMAP" id="MF_01631">
    <property type="entry name" value="GlmU"/>
    <property type="match status" value="1"/>
</dbReference>
<dbReference type="InterPro" id="IPR005882">
    <property type="entry name" value="Bifunctional_GlmU"/>
</dbReference>
<dbReference type="InterPro" id="IPR050065">
    <property type="entry name" value="GlmU-like"/>
</dbReference>
<dbReference type="InterPro" id="IPR038009">
    <property type="entry name" value="GlmU_C_LbH"/>
</dbReference>
<dbReference type="InterPro" id="IPR001451">
    <property type="entry name" value="Hexapep"/>
</dbReference>
<dbReference type="InterPro" id="IPR018357">
    <property type="entry name" value="Hexapep_transf_CS"/>
</dbReference>
<dbReference type="InterPro" id="IPR025877">
    <property type="entry name" value="MobA-like_NTP_Trfase"/>
</dbReference>
<dbReference type="InterPro" id="IPR029044">
    <property type="entry name" value="Nucleotide-diphossugar_trans"/>
</dbReference>
<dbReference type="InterPro" id="IPR011004">
    <property type="entry name" value="Trimer_LpxA-like_sf"/>
</dbReference>
<dbReference type="NCBIfam" id="TIGR01173">
    <property type="entry name" value="glmU"/>
    <property type="match status" value="1"/>
</dbReference>
<dbReference type="PANTHER" id="PTHR43584:SF3">
    <property type="entry name" value="BIFUNCTIONAL PROTEIN GLMU"/>
    <property type="match status" value="1"/>
</dbReference>
<dbReference type="PANTHER" id="PTHR43584">
    <property type="entry name" value="NUCLEOTIDYL TRANSFERASE"/>
    <property type="match status" value="1"/>
</dbReference>
<dbReference type="Pfam" id="PF00132">
    <property type="entry name" value="Hexapep"/>
    <property type="match status" value="2"/>
</dbReference>
<dbReference type="Pfam" id="PF12804">
    <property type="entry name" value="NTP_transf_3"/>
    <property type="match status" value="1"/>
</dbReference>
<dbReference type="SUPFAM" id="SSF53448">
    <property type="entry name" value="Nucleotide-diphospho-sugar transferases"/>
    <property type="match status" value="1"/>
</dbReference>
<dbReference type="SUPFAM" id="SSF51161">
    <property type="entry name" value="Trimeric LpxA-like enzymes"/>
    <property type="match status" value="1"/>
</dbReference>
<dbReference type="PROSITE" id="PS00101">
    <property type="entry name" value="HEXAPEP_TRANSFERASES"/>
    <property type="match status" value="1"/>
</dbReference>
<name>GLMU_LEGPA</name>
<organism>
    <name type="scientific">Legionella pneumophila (strain Paris)</name>
    <dbReference type="NCBI Taxonomy" id="297246"/>
    <lineage>
        <taxon>Bacteria</taxon>
        <taxon>Pseudomonadati</taxon>
        <taxon>Pseudomonadota</taxon>
        <taxon>Gammaproteobacteria</taxon>
        <taxon>Legionellales</taxon>
        <taxon>Legionellaceae</taxon>
        <taxon>Legionella</taxon>
    </lineage>
</organism>
<gene>
    <name evidence="1" type="primary">glmU</name>
    <name type="ordered locus">lpp2934</name>
</gene>
<protein>
    <recommendedName>
        <fullName evidence="1">Bifunctional protein GlmU</fullName>
    </recommendedName>
    <domain>
        <recommendedName>
            <fullName evidence="1">UDP-N-acetylglucosamine pyrophosphorylase</fullName>
            <ecNumber evidence="1">2.7.7.23</ecNumber>
        </recommendedName>
        <alternativeName>
            <fullName evidence="1">N-acetylglucosamine-1-phosphate uridyltransferase</fullName>
        </alternativeName>
    </domain>
    <domain>
        <recommendedName>
            <fullName evidence="1">Glucosamine-1-phosphate N-acetyltransferase</fullName>
            <ecNumber evidence="1">2.3.1.157</ecNumber>
        </recommendedName>
    </domain>
</protein>
<keyword id="KW-0012">Acyltransferase</keyword>
<keyword id="KW-0133">Cell shape</keyword>
<keyword id="KW-0961">Cell wall biogenesis/degradation</keyword>
<keyword id="KW-0963">Cytoplasm</keyword>
<keyword id="KW-0460">Magnesium</keyword>
<keyword id="KW-0479">Metal-binding</keyword>
<keyword id="KW-0511">Multifunctional enzyme</keyword>
<keyword id="KW-0548">Nucleotidyltransferase</keyword>
<keyword id="KW-0573">Peptidoglycan synthesis</keyword>
<keyword id="KW-0677">Repeat</keyword>
<keyword id="KW-0808">Transferase</keyword>
<feature type="chain" id="PRO_0000233791" description="Bifunctional protein GlmU">
    <location>
        <begin position="1"/>
        <end position="461"/>
    </location>
</feature>
<feature type="region of interest" description="Pyrophosphorylase" evidence="1">
    <location>
        <begin position="1"/>
        <end position="232"/>
    </location>
</feature>
<feature type="region of interest" description="Linker" evidence="1">
    <location>
        <begin position="233"/>
        <end position="253"/>
    </location>
</feature>
<feature type="region of interest" description="N-acetyltransferase" evidence="1">
    <location>
        <begin position="254"/>
        <end position="461"/>
    </location>
</feature>
<feature type="active site" description="Proton acceptor" evidence="1">
    <location>
        <position position="366"/>
    </location>
</feature>
<feature type="binding site" evidence="1">
    <location>
        <begin position="8"/>
        <end position="11"/>
    </location>
    <ligand>
        <name>UDP-N-acetyl-alpha-D-glucosamine</name>
        <dbReference type="ChEBI" id="CHEBI:57705"/>
    </ligand>
</feature>
<feature type="binding site" evidence="1">
    <location>
        <position position="22"/>
    </location>
    <ligand>
        <name>UDP-N-acetyl-alpha-D-glucosamine</name>
        <dbReference type="ChEBI" id="CHEBI:57705"/>
    </ligand>
</feature>
<feature type="binding site" evidence="1">
    <location>
        <position position="73"/>
    </location>
    <ligand>
        <name>UDP-N-acetyl-alpha-D-glucosamine</name>
        <dbReference type="ChEBI" id="CHEBI:57705"/>
    </ligand>
</feature>
<feature type="binding site" evidence="1">
    <location>
        <begin position="78"/>
        <end position="79"/>
    </location>
    <ligand>
        <name>UDP-N-acetyl-alpha-D-glucosamine</name>
        <dbReference type="ChEBI" id="CHEBI:57705"/>
    </ligand>
</feature>
<feature type="binding site" evidence="1">
    <location>
        <position position="102"/>
    </location>
    <ligand>
        <name>Mg(2+)</name>
        <dbReference type="ChEBI" id="CHEBI:18420"/>
    </ligand>
</feature>
<feature type="binding site" evidence="1">
    <location>
        <position position="142"/>
    </location>
    <ligand>
        <name>UDP-N-acetyl-alpha-D-glucosamine</name>
        <dbReference type="ChEBI" id="CHEBI:57705"/>
    </ligand>
</feature>
<feature type="binding site" evidence="1">
    <location>
        <position position="157"/>
    </location>
    <ligand>
        <name>UDP-N-acetyl-alpha-D-glucosamine</name>
        <dbReference type="ChEBI" id="CHEBI:57705"/>
    </ligand>
</feature>
<feature type="binding site" evidence="1">
    <location>
        <position position="230"/>
    </location>
    <ligand>
        <name>Mg(2+)</name>
        <dbReference type="ChEBI" id="CHEBI:18420"/>
    </ligand>
</feature>
<feature type="binding site" evidence="1">
    <location>
        <position position="230"/>
    </location>
    <ligand>
        <name>UDP-N-acetyl-alpha-D-glucosamine</name>
        <dbReference type="ChEBI" id="CHEBI:57705"/>
    </ligand>
</feature>
<feature type="binding site" evidence="1">
    <location>
        <position position="336"/>
    </location>
    <ligand>
        <name>UDP-N-acetyl-alpha-D-glucosamine</name>
        <dbReference type="ChEBI" id="CHEBI:57705"/>
    </ligand>
</feature>
<feature type="binding site" evidence="1">
    <location>
        <position position="354"/>
    </location>
    <ligand>
        <name>UDP-N-acetyl-alpha-D-glucosamine</name>
        <dbReference type="ChEBI" id="CHEBI:57705"/>
    </ligand>
</feature>
<feature type="binding site" evidence="1">
    <location>
        <position position="369"/>
    </location>
    <ligand>
        <name>UDP-N-acetyl-alpha-D-glucosamine</name>
        <dbReference type="ChEBI" id="CHEBI:57705"/>
    </ligand>
</feature>
<feature type="binding site" evidence="1">
    <location>
        <position position="380"/>
    </location>
    <ligand>
        <name>UDP-N-acetyl-alpha-D-glucosamine</name>
        <dbReference type="ChEBI" id="CHEBI:57705"/>
    </ligand>
</feature>
<feature type="binding site" evidence="1">
    <location>
        <position position="383"/>
    </location>
    <ligand>
        <name>acetyl-CoA</name>
        <dbReference type="ChEBI" id="CHEBI:57288"/>
    </ligand>
</feature>
<feature type="binding site" evidence="1">
    <location>
        <begin position="389"/>
        <end position="390"/>
    </location>
    <ligand>
        <name>acetyl-CoA</name>
        <dbReference type="ChEBI" id="CHEBI:57288"/>
    </ligand>
</feature>
<feature type="binding site" evidence="1">
    <location>
        <position position="408"/>
    </location>
    <ligand>
        <name>acetyl-CoA</name>
        <dbReference type="ChEBI" id="CHEBI:57288"/>
    </ligand>
</feature>
<feature type="binding site" evidence="1">
    <location>
        <position position="426"/>
    </location>
    <ligand>
        <name>acetyl-CoA</name>
        <dbReference type="ChEBI" id="CHEBI:57288"/>
    </ligand>
</feature>
<accession>Q5X112</accession>